<proteinExistence type="evidence at protein level"/>
<feature type="transit peptide" description="Mitochondrion" evidence="1">
    <location>
        <begin position="1"/>
        <end position="25"/>
    </location>
</feature>
<feature type="chain" id="PRO_0000005044" description="Heat shock protein 60, mitochondrial">
    <location>
        <begin position="26"/>
        <end position="572"/>
    </location>
</feature>
<feature type="modified residue" description="Phosphothreonine" evidence="4">
    <location>
        <position position="102"/>
    </location>
</feature>
<feature type="modified residue" description="Phosphoserine" evidence="5">
    <location>
        <position position="485"/>
    </location>
</feature>
<keyword id="KW-0067">ATP-binding</keyword>
<keyword id="KW-0143">Chaperone</keyword>
<keyword id="KW-0903">Direct protein sequencing</keyword>
<keyword id="KW-0496">Mitochondrion</keyword>
<keyword id="KW-0547">Nucleotide-binding</keyword>
<keyword id="KW-0597">Phosphoprotein</keyword>
<keyword id="KW-1185">Reference proteome</keyword>
<keyword id="KW-0346">Stress response</keyword>
<keyword id="KW-0809">Transit peptide</keyword>
<evidence type="ECO:0000255" key="1"/>
<evidence type="ECO:0000269" key="2">
    <source>
    </source>
</evidence>
<evidence type="ECO:0000305" key="3"/>
<evidence type="ECO:0007744" key="4">
    <source>
    </source>
</evidence>
<evidence type="ECO:0007744" key="5">
    <source>
    </source>
</evidence>
<comment type="function">
    <text>May participate in assembly and/or disassembly of proteins imported into the mitochondrion. HSP60 are ATPases and have affinity for unfolded proteins.</text>
</comment>
<comment type="interaction">
    <interactant intactId="EBI-8586">
        <id>P19882</id>
    </interactant>
    <interactant intactId="EBI-14757">
        <id>P07276</id>
        <label>RAD2</label>
    </interactant>
    <organismsDiffer>false</organismsDiffer>
    <experiments>2</experiments>
</comment>
<comment type="interaction">
    <interactant intactId="EBI-8586">
        <id>P19882</id>
    </interactant>
    <interactant intactId="EBI-19558">
        <id>Q12093</id>
        <label>SLM3</label>
    </interactant>
    <organismsDiffer>false</organismsDiffer>
    <experiments>2</experiments>
</comment>
<comment type="subcellular location">
    <subcellularLocation>
        <location evidence="2">Mitochondrion matrix</location>
    </subcellularLocation>
</comment>
<comment type="similarity">
    <text evidence="3">Belongs to the chaperonin (HSP60) family.</text>
</comment>
<name>HSP60_YEAST</name>
<dbReference type="EMBL" id="M33301">
    <property type="protein sequence ID" value="AAA34690.1"/>
    <property type="molecule type" value="Genomic_DNA"/>
</dbReference>
<dbReference type="EMBL" id="U17244">
    <property type="protein sequence ID" value="AAB67380.1"/>
    <property type="molecule type" value="Genomic_DNA"/>
</dbReference>
<dbReference type="EMBL" id="BK006945">
    <property type="protein sequence ID" value="DAA09572.1"/>
    <property type="molecule type" value="Genomic_DNA"/>
</dbReference>
<dbReference type="PIR" id="JQ0157">
    <property type="entry name" value="JQ0157"/>
</dbReference>
<dbReference type="RefSeq" id="NP_013360.1">
    <property type="nucleotide sequence ID" value="NM_001182146.1"/>
</dbReference>
<dbReference type="SMR" id="P19882"/>
<dbReference type="BioGRID" id="31527">
    <property type="interactions" value="409"/>
</dbReference>
<dbReference type="DIP" id="DIP-7648N"/>
<dbReference type="FunCoup" id="P19882">
    <property type="interactions" value="2021"/>
</dbReference>
<dbReference type="IntAct" id="P19882">
    <property type="interactions" value="279"/>
</dbReference>
<dbReference type="MINT" id="P19882"/>
<dbReference type="STRING" id="4932.YLR259C"/>
<dbReference type="CarbonylDB" id="P19882"/>
<dbReference type="iPTMnet" id="P19882"/>
<dbReference type="PaxDb" id="4932-YLR259C"/>
<dbReference type="PeptideAtlas" id="P19882"/>
<dbReference type="EnsemblFungi" id="YLR259C_mRNA">
    <property type="protein sequence ID" value="YLR259C"/>
    <property type="gene ID" value="YLR259C"/>
</dbReference>
<dbReference type="GeneID" id="850963"/>
<dbReference type="KEGG" id="sce:YLR259C"/>
<dbReference type="AGR" id="SGD:S000004249"/>
<dbReference type="SGD" id="S000004249">
    <property type="gene designation" value="HSP60"/>
</dbReference>
<dbReference type="VEuPathDB" id="FungiDB:YLR259C"/>
<dbReference type="eggNOG" id="KOG0356">
    <property type="taxonomic scope" value="Eukaryota"/>
</dbReference>
<dbReference type="GeneTree" id="ENSGT00390000005727"/>
<dbReference type="HOGENOM" id="CLU_016503_3_0_1"/>
<dbReference type="InParanoid" id="P19882"/>
<dbReference type="OMA" id="TDTDKME"/>
<dbReference type="OrthoDB" id="1733909at2759"/>
<dbReference type="BioCyc" id="YEAST:G3O-32361-MONOMER"/>
<dbReference type="Reactome" id="R-SCE-1268020">
    <property type="pathway name" value="Mitochondrial protein import"/>
</dbReference>
<dbReference type="Reactome" id="R-SCE-9837999">
    <property type="pathway name" value="Mitochondrial protein degradation"/>
</dbReference>
<dbReference type="BioGRID-ORCS" id="850963">
    <property type="hits" value="6 hits in 10 CRISPR screens"/>
</dbReference>
<dbReference type="PRO" id="PR:P19882"/>
<dbReference type="Proteomes" id="UP000002311">
    <property type="component" value="Chromosome XII"/>
</dbReference>
<dbReference type="RNAct" id="P19882">
    <property type="molecule type" value="protein"/>
</dbReference>
<dbReference type="GO" id="GO:0005829">
    <property type="term" value="C:cytosol"/>
    <property type="evidence" value="ECO:0000304"/>
    <property type="project" value="Reactome"/>
</dbReference>
<dbReference type="GO" id="GO:0005743">
    <property type="term" value="C:mitochondrial inner membrane"/>
    <property type="evidence" value="ECO:0000318"/>
    <property type="project" value="GO_Central"/>
</dbReference>
<dbReference type="GO" id="GO:0005758">
    <property type="term" value="C:mitochondrial intermembrane space"/>
    <property type="evidence" value="ECO:0000304"/>
    <property type="project" value="Reactome"/>
</dbReference>
<dbReference type="GO" id="GO:0005759">
    <property type="term" value="C:mitochondrial matrix"/>
    <property type="evidence" value="ECO:0000318"/>
    <property type="project" value="GO_Central"/>
</dbReference>
<dbReference type="GO" id="GO:0042645">
    <property type="term" value="C:mitochondrial nucleoid"/>
    <property type="evidence" value="ECO:0000314"/>
    <property type="project" value="SGD"/>
</dbReference>
<dbReference type="GO" id="GO:0005739">
    <property type="term" value="C:mitochondrion"/>
    <property type="evidence" value="ECO:0000314"/>
    <property type="project" value="SGD"/>
</dbReference>
<dbReference type="GO" id="GO:0005524">
    <property type="term" value="F:ATP binding"/>
    <property type="evidence" value="ECO:0007669"/>
    <property type="project" value="UniProtKB-KW"/>
</dbReference>
<dbReference type="GO" id="GO:0016887">
    <property type="term" value="F:ATP hydrolysis activity"/>
    <property type="evidence" value="ECO:0000314"/>
    <property type="project" value="SGD"/>
</dbReference>
<dbReference type="GO" id="GO:0140662">
    <property type="term" value="F:ATP-dependent protein folding chaperone"/>
    <property type="evidence" value="ECO:0007669"/>
    <property type="project" value="InterPro"/>
</dbReference>
<dbReference type="GO" id="GO:0003688">
    <property type="term" value="F:DNA replication origin binding"/>
    <property type="evidence" value="ECO:0000314"/>
    <property type="project" value="SGD"/>
</dbReference>
<dbReference type="GO" id="GO:0051087">
    <property type="term" value="F:protein-folding chaperone binding"/>
    <property type="evidence" value="ECO:0000353"/>
    <property type="project" value="SGD"/>
</dbReference>
<dbReference type="GO" id="GO:0003697">
    <property type="term" value="F:single-stranded DNA binding"/>
    <property type="evidence" value="ECO:0000314"/>
    <property type="project" value="SGD"/>
</dbReference>
<dbReference type="GO" id="GO:0051082">
    <property type="term" value="F:unfolded protein binding"/>
    <property type="evidence" value="ECO:0000315"/>
    <property type="project" value="SGD"/>
</dbReference>
<dbReference type="GO" id="GO:0006458">
    <property type="term" value="P:'de novo' protein folding"/>
    <property type="evidence" value="ECO:0000315"/>
    <property type="project" value="SGD"/>
</dbReference>
<dbReference type="GO" id="GO:0051131">
    <property type="term" value="P:chaperone-mediated protein complex assembly"/>
    <property type="evidence" value="ECO:0000315"/>
    <property type="project" value="SGD"/>
</dbReference>
<dbReference type="GO" id="GO:0000002">
    <property type="term" value="P:mitochondrial genome maintenance"/>
    <property type="evidence" value="ECO:0000315"/>
    <property type="project" value="SGD"/>
</dbReference>
<dbReference type="GO" id="GO:0034514">
    <property type="term" value="P:mitochondrial unfolded protein response"/>
    <property type="evidence" value="ECO:0000318"/>
    <property type="project" value="GO_Central"/>
</dbReference>
<dbReference type="GO" id="GO:0007005">
    <property type="term" value="P:mitochondrion organization"/>
    <property type="evidence" value="ECO:0000318"/>
    <property type="project" value="GO_Central"/>
</dbReference>
<dbReference type="GO" id="GO:0006457">
    <property type="term" value="P:protein folding"/>
    <property type="evidence" value="ECO:0000318"/>
    <property type="project" value="GO_Central"/>
</dbReference>
<dbReference type="GO" id="GO:0045041">
    <property type="term" value="P:protein import into mitochondrial intermembrane space"/>
    <property type="evidence" value="ECO:0000315"/>
    <property type="project" value="SGD"/>
</dbReference>
<dbReference type="GO" id="GO:0051604">
    <property type="term" value="P:protein maturation"/>
    <property type="evidence" value="ECO:0000315"/>
    <property type="project" value="SGD"/>
</dbReference>
<dbReference type="GO" id="GO:0042026">
    <property type="term" value="P:protein refolding"/>
    <property type="evidence" value="ECO:0000314"/>
    <property type="project" value="SGD"/>
</dbReference>
<dbReference type="GO" id="GO:0050821">
    <property type="term" value="P:protein stabilization"/>
    <property type="evidence" value="ECO:0000315"/>
    <property type="project" value="SGD"/>
</dbReference>
<dbReference type="CDD" id="cd03344">
    <property type="entry name" value="GroEL"/>
    <property type="match status" value="1"/>
</dbReference>
<dbReference type="FunFam" id="3.50.7.10:FF:000001">
    <property type="entry name" value="60 kDa chaperonin"/>
    <property type="match status" value="1"/>
</dbReference>
<dbReference type="Gene3D" id="3.50.7.10">
    <property type="entry name" value="GroEL"/>
    <property type="match status" value="1"/>
</dbReference>
<dbReference type="Gene3D" id="1.10.560.10">
    <property type="entry name" value="GroEL-like equatorial domain"/>
    <property type="match status" value="1"/>
</dbReference>
<dbReference type="Gene3D" id="3.30.260.10">
    <property type="entry name" value="TCP-1-like chaperonin intermediate domain"/>
    <property type="match status" value="1"/>
</dbReference>
<dbReference type="HAMAP" id="MF_00600">
    <property type="entry name" value="CH60"/>
    <property type="match status" value="1"/>
</dbReference>
<dbReference type="InterPro" id="IPR018370">
    <property type="entry name" value="Chaperonin_Cpn60_CS"/>
</dbReference>
<dbReference type="InterPro" id="IPR001844">
    <property type="entry name" value="Cpn60/GroEL"/>
</dbReference>
<dbReference type="InterPro" id="IPR002423">
    <property type="entry name" value="Cpn60/GroEL/TCP-1"/>
</dbReference>
<dbReference type="InterPro" id="IPR027409">
    <property type="entry name" value="GroEL-like_apical_dom_sf"/>
</dbReference>
<dbReference type="InterPro" id="IPR027413">
    <property type="entry name" value="GROEL-like_equatorial_sf"/>
</dbReference>
<dbReference type="InterPro" id="IPR027410">
    <property type="entry name" value="TCP-1-like_intermed_sf"/>
</dbReference>
<dbReference type="NCBIfam" id="TIGR02348">
    <property type="entry name" value="GroEL"/>
    <property type="match status" value="1"/>
</dbReference>
<dbReference type="NCBIfam" id="NF000592">
    <property type="entry name" value="PRK00013.1"/>
    <property type="match status" value="1"/>
</dbReference>
<dbReference type="NCBIfam" id="NF009487">
    <property type="entry name" value="PRK12849.1"/>
    <property type="match status" value="1"/>
</dbReference>
<dbReference type="NCBIfam" id="NF009488">
    <property type="entry name" value="PRK12850.1"/>
    <property type="match status" value="1"/>
</dbReference>
<dbReference type="NCBIfam" id="NF009489">
    <property type="entry name" value="PRK12851.1"/>
    <property type="match status" value="1"/>
</dbReference>
<dbReference type="PANTHER" id="PTHR45633">
    <property type="entry name" value="60 KDA HEAT SHOCK PROTEIN, MITOCHONDRIAL"/>
    <property type="match status" value="1"/>
</dbReference>
<dbReference type="Pfam" id="PF00118">
    <property type="entry name" value="Cpn60_TCP1"/>
    <property type="match status" value="1"/>
</dbReference>
<dbReference type="PRINTS" id="PR00298">
    <property type="entry name" value="CHAPERONIN60"/>
</dbReference>
<dbReference type="SUPFAM" id="SSF52029">
    <property type="entry name" value="GroEL apical domain-like"/>
    <property type="match status" value="1"/>
</dbReference>
<dbReference type="SUPFAM" id="SSF48592">
    <property type="entry name" value="GroEL equatorial domain-like"/>
    <property type="match status" value="1"/>
</dbReference>
<dbReference type="SUPFAM" id="SSF54849">
    <property type="entry name" value="GroEL-intermediate domain like"/>
    <property type="match status" value="1"/>
</dbReference>
<dbReference type="PROSITE" id="PS00296">
    <property type="entry name" value="CHAPERONINS_CPN60"/>
    <property type="match status" value="1"/>
</dbReference>
<organism>
    <name type="scientific">Saccharomyces cerevisiae (strain ATCC 204508 / S288c)</name>
    <name type="common">Baker's yeast</name>
    <dbReference type="NCBI Taxonomy" id="559292"/>
    <lineage>
        <taxon>Eukaryota</taxon>
        <taxon>Fungi</taxon>
        <taxon>Dikarya</taxon>
        <taxon>Ascomycota</taxon>
        <taxon>Saccharomycotina</taxon>
        <taxon>Saccharomycetes</taxon>
        <taxon>Saccharomycetales</taxon>
        <taxon>Saccharomycetaceae</taxon>
        <taxon>Saccharomyces</taxon>
    </lineage>
</organism>
<reference key="1">
    <citation type="journal article" date="1989" name="Gene">
        <title>Cloning and characterization of the yeast chaperonin HSP60 gene.</title>
        <authorList>
            <person name="Johnson R.B."/>
            <person name="Fearon K."/>
            <person name="Mason T."/>
            <person name="Jindal S."/>
        </authorList>
    </citation>
    <scope>NUCLEOTIDE SEQUENCE [GENOMIC DNA]</scope>
    <source>
        <strain>ATCC 204508 / S288c</strain>
    </source>
</reference>
<reference key="2">
    <citation type="journal article" date="1989" name="Nature">
        <title>Characterization of the yeast HSP60 gene coding for a mitochondrial assembly factor.</title>
        <authorList>
            <person name="Reading D.S."/>
            <person name="Hallberg R.L."/>
            <person name="Myers A.M."/>
        </authorList>
    </citation>
    <scope>NUCLEOTIDE SEQUENCE [GENOMIC DNA]</scope>
    <source>
        <strain>ATCC 200060 / W303</strain>
    </source>
</reference>
<reference key="3">
    <citation type="journal article" date="1997" name="Nature">
        <title>The nucleotide sequence of Saccharomyces cerevisiae chromosome XII.</title>
        <authorList>
            <person name="Johnston M."/>
            <person name="Hillier L.W."/>
            <person name="Riles L."/>
            <person name="Albermann K."/>
            <person name="Andre B."/>
            <person name="Ansorge W."/>
            <person name="Benes V."/>
            <person name="Brueckner M."/>
            <person name="Delius H."/>
            <person name="Dubois E."/>
            <person name="Duesterhoeft A."/>
            <person name="Entian K.-D."/>
            <person name="Floeth M."/>
            <person name="Goffeau A."/>
            <person name="Hebling U."/>
            <person name="Heumann K."/>
            <person name="Heuss-Neitzel D."/>
            <person name="Hilbert H."/>
            <person name="Hilger F."/>
            <person name="Kleine K."/>
            <person name="Koetter P."/>
            <person name="Louis E.J."/>
            <person name="Messenguy F."/>
            <person name="Mewes H.-W."/>
            <person name="Miosga T."/>
            <person name="Moestl D."/>
            <person name="Mueller-Auer S."/>
            <person name="Nentwich U."/>
            <person name="Obermaier B."/>
            <person name="Piravandi E."/>
            <person name="Pohl T.M."/>
            <person name="Portetelle D."/>
            <person name="Purnelle B."/>
            <person name="Rechmann S."/>
            <person name="Rieger M."/>
            <person name="Rinke M."/>
            <person name="Rose M."/>
            <person name="Scharfe M."/>
            <person name="Scherens B."/>
            <person name="Scholler P."/>
            <person name="Schwager C."/>
            <person name="Schwarz S."/>
            <person name="Underwood A.P."/>
            <person name="Urrestarazu L.A."/>
            <person name="Vandenbol M."/>
            <person name="Verhasselt P."/>
            <person name="Vierendeels F."/>
            <person name="Voet M."/>
            <person name="Volckaert G."/>
            <person name="Voss H."/>
            <person name="Wambutt R."/>
            <person name="Wedler E."/>
            <person name="Wedler H."/>
            <person name="Zimmermann F.K."/>
            <person name="Zollner A."/>
            <person name="Hani J."/>
            <person name="Hoheisel J.D."/>
        </authorList>
    </citation>
    <scope>NUCLEOTIDE SEQUENCE [LARGE SCALE GENOMIC DNA]</scope>
    <source>
        <strain>ATCC 204508 / S288c</strain>
    </source>
</reference>
<reference key="4">
    <citation type="journal article" date="2014" name="G3 (Bethesda)">
        <title>The reference genome sequence of Saccharomyces cerevisiae: Then and now.</title>
        <authorList>
            <person name="Engel S.R."/>
            <person name="Dietrich F.S."/>
            <person name="Fisk D.G."/>
            <person name="Binkley G."/>
            <person name="Balakrishnan R."/>
            <person name="Costanzo M.C."/>
            <person name="Dwight S.S."/>
            <person name="Hitz B.C."/>
            <person name="Karra K."/>
            <person name="Nash R.S."/>
            <person name="Weng S."/>
            <person name="Wong E.D."/>
            <person name="Lloyd P."/>
            <person name="Skrzypek M.S."/>
            <person name="Miyasato S.R."/>
            <person name="Simison M."/>
            <person name="Cherry J.M."/>
        </authorList>
    </citation>
    <scope>GENOME REANNOTATION</scope>
    <source>
        <strain>ATCC 204508 / S288c</strain>
    </source>
</reference>
<reference key="5">
    <citation type="journal article" date="1992" name="Nucleic Acids Res.">
        <title>The 66 kDa component of yeast SFI, stimulatory factor I, is hsp60.</title>
        <authorList>
            <person name="Smiley J.K."/>
            <person name="Brown W.C."/>
            <person name="Campbell J.L."/>
        </authorList>
    </citation>
    <scope>PARTIAL NUCLEOTIDE SEQUENCE</scope>
</reference>
<reference key="6">
    <citation type="journal article" date="2001" name="Biochemistry">
        <title>Yeast mitochondrial dehydrogenases are associated in a supramolecular complex.</title>
        <authorList>
            <person name="Grandier-Vazeille X."/>
            <person name="Bathany K."/>
            <person name="Chaignepain S."/>
            <person name="Camougrand N."/>
            <person name="Manon S."/>
            <person name="Schmitter J.-M."/>
        </authorList>
    </citation>
    <scope>PROTEIN SEQUENCE OF 28-34; 101-116; 148-153; 443-450 AND 507-514</scope>
    <scope>SUBCELLULAR LOCATION</scope>
    <source>
        <strain>ATCC 201238 / W303-1B</strain>
    </source>
</reference>
<reference key="7">
    <citation type="journal article" date="2003" name="Mol. Cell">
        <title>Assigning function to yeast proteins by integration of technologies.</title>
        <authorList>
            <person name="Hazbun T.R."/>
            <person name="Malmstroem L."/>
            <person name="Anderson S."/>
            <person name="Graczyk B.J."/>
            <person name="Fox B."/>
            <person name="Riffle M."/>
            <person name="Sundin B.A."/>
            <person name="Aranda J.D."/>
            <person name="McDonald W.H."/>
            <person name="Chiu C.-H."/>
            <person name="Snydsman B.E."/>
            <person name="Bradley P."/>
            <person name="Muller E.G.D."/>
            <person name="Fields S."/>
            <person name="Baker D."/>
            <person name="Yates J.R. III"/>
            <person name="Davis T.N."/>
        </authorList>
    </citation>
    <scope>IDENTIFICATION BY MASS SPECTROMETRY</scope>
</reference>
<reference key="8">
    <citation type="journal article" date="2007" name="Mol. Cell. Proteomics">
        <title>Profiling phosphoproteins of yeast mitochondria reveals a role of phosphorylation in assembly of the ATP synthase.</title>
        <authorList>
            <person name="Reinders J."/>
            <person name="Wagner K."/>
            <person name="Zahedi R.P."/>
            <person name="Stojanovski D."/>
            <person name="Eyrich B."/>
            <person name="van der Laan M."/>
            <person name="Rehling P."/>
            <person name="Sickmann A."/>
            <person name="Pfanner N."/>
            <person name="Meisinger C."/>
        </authorList>
    </citation>
    <scope>PHOSPHORYLATION [LARGE SCALE ANALYSIS] AT THR-102</scope>
    <scope>IDENTIFICATION BY MASS SPECTROMETRY [LARGE SCALE ANALYSIS]</scope>
    <source>
        <strain>ATCC 76625 / YPH499</strain>
    </source>
</reference>
<reference key="9">
    <citation type="journal article" date="2008" name="Mol. Cell. Proteomics">
        <title>A multidimensional chromatography technology for in-depth phosphoproteome analysis.</title>
        <authorList>
            <person name="Albuquerque C.P."/>
            <person name="Smolka M.B."/>
            <person name="Payne S.H."/>
            <person name="Bafna V."/>
            <person name="Eng J."/>
            <person name="Zhou H."/>
        </authorList>
    </citation>
    <scope>PHOSPHORYLATION [LARGE SCALE ANALYSIS] AT SER-485</scope>
    <scope>IDENTIFICATION BY MASS SPECTROMETRY [LARGE SCALE ANALYSIS]</scope>
</reference>
<accession>P19882</accession>
<accession>D6VYQ6</accession>
<protein>
    <recommendedName>
        <fullName>Heat shock protein 60, mitochondrial</fullName>
    </recommendedName>
    <alternativeName>
        <fullName>CPN60</fullName>
    </alternativeName>
    <alternativeName>
        <fullName>P66</fullName>
    </alternativeName>
    <alternativeName>
        <fullName>Stimulator factor I 66 kDa component</fullName>
    </alternativeName>
</protein>
<sequence>MLRSSVVRSRATLRPLLRRAYSSHKELKFGVEGRASLLKGVETLAEAVAATLGPKGRNVLIEQPFGPPKITKDGVTVAKSIVLKDKFENMGAKLLQEVASKTNEAAGDGTTSATVLGRAIFTESVKNVAAGCNPMDLRRGSQVAVEKVIEFLSANKKEITTSEEIAQVATISANGDSHVGKLLASAMEKVGKEGVITIREGRTLEDELEVTEGMRFDRGFISPYFITDPKSSKVEFEKPLLLLSEKKISSIQDILPALEISNQSRRPLLIIAEDVDGEALAACILNKLRGQVKVCAVKAPGFGDNRKNTIGDIAVLTGGTVFTEELDLKPEQCTIENLGSCDSITVTKEDTVILNGSGPKEAIQERIEQIKGSIDITTTNSYEKEKLQERLAKLSGGVAVIRVGGASEVEVGEKKDRYDDALNATRAAVEEGILPGGGTALVKASRVLDEVVVDNFDQKLGVDIIRKAITRPAKQIIENAGEEGSVIIGKLIDEYGDDFAKGYDASKSEYTDMLATGIIDPFKVVRSGLVDASGVASLLATTEVAIVDAPEPPAAAGAGGMPGGMPGMPGMM</sequence>
<gene>
    <name type="primary">HSP60</name>
    <name type="synonym">MIF4</name>
    <name type="ordered locus">YLR259C</name>
    <name type="ORF">L8479.10</name>
</gene>